<comment type="function">
    <text evidence="1">Involved in the breakdown of propeptides of storage proteins in protein-storage vacuoles.</text>
</comment>
<comment type="catalytic activity">
    <reaction>
        <text>Prefers hydrophobic residues Phe, Val, Ile, Leu, and Ala at P1 and P1', but also cleaves -Phe-|-Asp- and -Asp-|-Asp- bonds in 2S albumin from plant seeds.</text>
        <dbReference type="EC" id="3.4.23.40"/>
    </reaction>
</comment>
<comment type="subunit">
    <text evidence="5">Heterodimer of two subunits (29 kDa and 11 kDa) processed from the precursor molecule. A large enzyme (32 kDa and 16 kDa) is an intermediate precursor form.</text>
</comment>
<comment type="subcellular location">
    <subcellularLocation>
        <location evidence="6">Vacuole</location>
    </subcellularLocation>
</comment>
<comment type="tissue specificity">
    <text>Embryo and leaf.</text>
</comment>
<comment type="similarity">
    <text evidence="7">Belongs to the peptidase A1 family.</text>
</comment>
<organism>
    <name type="scientific">Hordeum vulgare</name>
    <name type="common">Barley</name>
    <dbReference type="NCBI Taxonomy" id="4513"/>
    <lineage>
        <taxon>Eukaryota</taxon>
        <taxon>Viridiplantae</taxon>
        <taxon>Streptophyta</taxon>
        <taxon>Embryophyta</taxon>
        <taxon>Tracheophyta</taxon>
        <taxon>Spermatophyta</taxon>
        <taxon>Magnoliopsida</taxon>
        <taxon>Liliopsida</taxon>
        <taxon>Poales</taxon>
        <taxon>Poaceae</taxon>
        <taxon>BOP clade</taxon>
        <taxon>Pooideae</taxon>
        <taxon>Triticodae</taxon>
        <taxon>Triticeae</taxon>
        <taxon>Hordeinae</taxon>
        <taxon>Hordeum</taxon>
    </lineage>
</organism>
<name>ASPR_HORVU</name>
<reference key="1">
    <citation type="journal article" date="1991" name="Eur. J. Biochem.">
        <title>Primary structure of a barley-grain aspartic proteinase. A plant aspartic proteinase resembling mammalian cathepsin D.</title>
        <authorList>
            <person name="Runeberg-Roos P."/>
            <person name="Toermaekangas K."/>
            <person name="Oestman A."/>
        </authorList>
    </citation>
    <scope>NUCLEOTIDE SEQUENCE [MRNA]</scope>
    <source>
        <strain>cv. Kustaa</strain>
        <tissue>Embryo</tissue>
    </source>
</reference>
<reference key="2">
    <citation type="journal article" date="1991" name="Adv. Exp. Med. Biol.">
        <title>Aspartic proteinase from barley seeds is related to animal cathepsin D.</title>
        <authorList>
            <person name="Toermaekangas K."/>
            <person name="Runeberg-Roos P."/>
            <person name="Oestman A."/>
            <person name="Tilgmann C."/>
            <person name="Sarkkinen P."/>
            <person name="Kervinen J."/>
            <person name="Mikola L."/>
            <person name="Kalkkinen N."/>
        </authorList>
    </citation>
    <scope>NUCLEOTIDE SEQUENCE [MRNA]</scope>
    <scope>PARTIAL PROTEIN SEQUENCE</scope>
    <source>
        <strain>cv. Kustaa</strain>
        <tissue>Embryo</tissue>
    </source>
</reference>
<reference key="3">
    <citation type="journal article" date="1996" name="Cell">
        <title>Plant cells contain two functionally distinct vacuolar compartments.</title>
        <authorList>
            <person name="Paris N."/>
            <person name="Stanley C.M."/>
            <person name="Jones R.L."/>
            <person name="Rogers J.C."/>
        </authorList>
    </citation>
    <scope>SUBCELLULAR LOCATION</scope>
</reference>
<reference key="4">
    <citation type="journal article" date="1999" name="EMBO J.">
        <title>Crystal structure of plant aspartic proteinase prophytepsin: inactivation and vacuolar targeting.</title>
        <authorList>
            <person name="Kervinen J."/>
            <person name="Tobin G.J."/>
            <person name="Costa J."/>
            <person name="Waugh D.S."/>
            <person name="Wlodawer A."/>
            <person name="Zdanov A."/>
        </authorList>
    </citation>
    <scope>X-RAY CRYSTALLOGRAPHY (2.30 ANGSTROMS) OF 31-508</scope>
    <scope>SUBUNIT</scope>
    <scope>DISULFIDE BONDS</scope>
</reference>
<sequence length="508" mass="54226">MGTRGLALALLAAVLLLQTVLPAASEAEGLVRIALKKRPIDRNSRVATGLSGGEEQPLLSGANPLRSEEEGDIVALKNYMNAQYFGEIGVGTPPQKFTVIFDTGSSNLWVPSAKCYFSIACYLHSRYKAGASSTYKKNGKPAAIQYGTGSIAGYFSEDSVTVGDLVVKDQEFIEATKEPGITFLVAKFDGILGLGFKEISVGKAVPVWYKMIEQGLVSDPVFSFWLNRHVDEGEGGEIIFGGMDPKHYVGEHTYVPVTQKGYWQFDMGDVLVGGKSTGFCAGGCAAIADSGTSLLAGPTAIITEINEKIGAAGVVSQECKTIVSQYGQQILDLLLAETQPKKICSQVGLCTFDGTRGVSAGIRSVVDDEPVKSNGLRADPMCSACEMAVVWMQNQLAQNKTQDLILDYVNQLCNRLPSPMGESAVDCGSLGSMPDIEFTIGGKKFALKPEEYILKVGEGAAAQCISGFTAMDIPPPRGPLWILGDVFMGPYHTVFDYGKLRIGFAKAA</sequence>
<evidence type="ECO:0000250" key="1"/>
<evidence type="ECO:0000255" key="2"/>
<evidence type="ECO:0000255" key="3">
    <source>
        <dbReference type="PROSITE-ProRule" id="PRU00415"/>
    </source>
</evidence>
<evidence type="ECO:0000255" key="4">
    <source>
        <dbReference type="PROSITE-ProRule" id="PRU01103"/>
    </source>
</evidence>
<evidence type="ECO:0000269" key="5">
    <source>
    </source>
</evidence>
<evidence type="ECO:0000269" key="6">
    <source>
    </source>
</evidence>
<evidence type="ECO:0000305" key="7"/>
<evidence type="ECO:0007744" key="8">
    <source>
        <dbReference type="PDB" id="1QDM"/>
    </source>
</evidence>
<evidence type="ECO:0007829" key="9">
    <source>
        <dbReference type="PDB" id="1QDM"/>
    </source>
</evidence>
<proteinExistence type="evidence at protein level"/>
<protein>
    <recommendedName>
        <fullName>Phytepsin</fullName>
        <ecNumber>3.4.23.40</ecNumber>
    </recommendedName>
    <alternativeName>
        <fullName>Aspartic proteinase</fullName>
    </alternativeName>
    <component>
        <recommendedName>
            <fullName>Phytepsin 32 kDa subunit</fullName>
        </recommendedName>
    </component>
    <component>
        <recommendedName>
            <fullName>Phytepsin 29 kDa subunit</fullName>
        </recommendedName>
    </component>
    <component>
        <recommendedName>
            <fullName>Phytepsin 16 kDa subunit</fullName>
        </recommendedName>
    </component>
    <component>
        <recommendedName>
            <fullName>Phytepsin 11 kDa subunit</fullName>
        </recommendedName>
    </component>
</protein>
<feature type="signal peptide" evidence="2">
    <location>
        <begin position="1"/>
        <end position="27"/>
    </location>
</feature>
<feature type="propeptide" id="PRO_0000025903" description="Activation peptide">
    <location>
        <begin position="28"/>
        <end position="66"/>
    </location>
</feature>
<feature type="chain" id="PRO_0000025904" description="Phytepsin 32 kDa subunit">
    <location>
        <begin position="67"/>
        <end position="377"/>
    </location>
</feature>
<feature type="chain" id="PRO_0000025905" description="Phytepsin 29 kDa subunit">
    <location>
        <begin position="67"/>
        <end status="unknown"/>
    </location>
</feature>
<feature type="chain" id="PRO_0000025906" description="Phytepsin 16 kDa subunit">
    <location>
        <begin position="378"/>
        <end position="508"/>
    </location>
</feature>
<feature type="chain" id="PRO_0000025907" description="Phytepsin 11 kDa subunit">
    <location>
        <begin position="422"/>
        <end position="508"/>
    </location>
</feature>
<feature type="domain" description="Peptidase A1" evidence="4">
    <location>
        <begin position="84"/>
        <end position="505"/>
    </location>
</feature>
<feature type="domain" description="Saposin B-type" evidence="3">
    <location>
        <begin position="314"/>
        <end position="419"/>
    </location>
</feature>
<feature type="active site">
    <location>
        <position position="102"/>
    </location>
</feature>
<feature type="active site">
    <location>
        <position position="289"/>
    </location>
</feature>
<feature type="site" description="Cleavage">
    <location>
        <begin position="377"/>
        <end position="378"/>
    </location>
</feature>
<feature type="site" description="Cleavage">
    <location>
        <begin position="421"/>
        <end position="422"/>
    </location>
</feature>
<feature type="glycosylation site" description="N-linked (GlcNAc...) asparagine" evidence="3">
    <location>
        <position position="399"/>
    </location>
</feature>
<feature type="disulfide bond" evidence="5 8">
    <location>
        <begin position="115"/>
        <end position="121"/>
    </location>
</feature>
<feature type="disulfide bond" evidence="5 8">
    <location>
        <begin position="280"/>
        <end position="284"/>
    </location>
</feature>
<feature type="disulfide bond" evidence="5 8">
    <location>
        <begin position="319"/>
        <end position="413"/>
    </location>
</feature>
<feature type="disulfide bond" evidence="5 8">
    <location>
        <begin position="344"/>
        <end position="385"/>
    </location>
</feature>
<feature type="disulfide bond" evidence="5 8">
    <location>
        <begin position="350"/>
        <end position="382"/>
    </location>
</feature>
<feature type="disulfide bond" evidence="5 8">
    <location>
        <begin position="427"/>
        <end position="464"/>
    </location>
</feature>
<feature type="strand" evidence="9">
    <location>
        <begin position="32"/>
        <end position="37"/>
    </location>
</feature>
<feature type="helix" evidence="9">
    <location>
        <begin position="42"/>
        <end position="49"/>
    </location>
</feature>
<feature type="helix" evidence="9">
    <location>
        <begin position="74"/>
        <end position="76"/>
    </location>
</feature>
<feature type="helix" evidence="9">
    <location>
        <begin position="79"/>
        <end position="81"/>
    </location>
</feature>
<feature type="strand" evidence="9">
    <location>
        <begin position="84"/>
        <end position="90"/>
    </location>
</feature>
<feature type="turn" evidence="9">
    <location>
        <begin position="91"/>
        <end position="94"/>
    </location>
</feature>
<feature type="strand" evidence="9">
    <location>
        <begin position="95"/>
        <end position="102"/>
    </location>
</feature>
<feature type="strand" evidence="9">
    <location>
        <begin position="109"/>
        <end position="112"/>
    </location>
</feature>
<feature type="helix" evidence="9">
    <location>
        <begin position="119"/>
        <end position="123"/>
    </location>
</feature>
<feature type="helix" evidence="9">
    <location>
        <begin position="129"/>
        <end position="131"/>
    </location>
</feature>
<feature type="strand" evidence="9">
    <location>
        <begin position="141"/>
        <end position="146"/>
    </location>
</feature>
<feature type="strand" evidence="9">
    <location>
        <begin position="149"/>
        <end position="162"/>
    </location>
</feature>
<feature type="strand" evidence="9">
    <location>
        <begin position="165"/>
        <end position="177"/>
    </location>
</feature>
<feature type="helix" evidence="9">
    <location>
        <begin position="182"/>
        <end position="185"/>
    </location>
</feature>
<feature type="strand" evidence="9">
    <location>
        <begin position="187"/>
        <end position="193"/>
    </location>
</feature>
<feature type="helix" evidence="9">
    <location>
        <begin position="197"/>
        <end position="199"/>
    </location>
</feature>
<feature type="helix" evidence="9">
    <location>
        <begin position="201"/>
        <end position="203"/>
    </location>
</feature>
<feature type="helix" evidence="9">
    <location>
        <begin position="207"/>
        <end position="211"/>
    </location>
</feature>
<feature type="turn" evidence="9">
    <location>
        <begin position="212"/>
        <end position="215"/>
    </location>
</feature>
<feature type="strand" evidence="9">
    <location>
        <begin position="218"/>
        <end position="225"/>
    </location>
</feature>
<feature type="strand" evidence="9">
    <location>
        <begin position="236"/>
        <end position="240"/>
    </location>
</feature>
<feature type="strand" evidence="9">
    <location>
        <begin position="247"/>
        <end position="259"/>
    </location>
</feature>
<feature type="strand" evidence="9">
    <location>
        <begin position="262"/>
        <end position="267"/>
    </location>
</feature>
<feature type="strand" evidence="9">
    <location>
        <begin position="270"/>
        <end position="272"/>
    </location>
</feature>
<feature type="turn" evidence="9">
    <location>
        <begin position="279"/>
        <end position="282"/>
    </location>
</feature>
<feature type="strand" evidence="9">
    <location>
        <begin position="284"/>
        <end position="288"/>
    </location>
</feature>
<feature type="strand" evidence="9">
    <location>
        <begin position="294"/>
        <end position="297"/>
    </location>
</feature>
<feature type="helix" evidence="9">
    <location>
        <begin position="299"/>
        <end position="309"/>
    </location>
</feature>
<feature type="helix" evidence="9">
    <location>
        <begin position="317"/>
        <end position="325"/>
    </location>
</feature>
<feature type="helix" evidence="9">
    <location>
        <begin position="327"/>
        <end position="335"/>
    </location>
</feature>
<feature type="helix" evidence="9">
    <location>
        <begin position="340"/>
        <end position="346"/>
    </location>
</feature>
<feature type="helix" evidence="9">
    <location>
        <begin position="379"/>
        <end position="397"/>
    </location>
</feature>
<feature type="helix" evidence="9">
    <location>
        <begin position="402"/>
        <end position="412"/>
    </location>
</feature>
<feature type="strand" evidence="9">
    <location>
        <begin position="419"/>
        <end position="421"/>
    </location>
</feature>
<feature type="helix" evidence="9">
    <location>
        <begin position="427"/>
        <end position="430"/>
    </location>
</feature>
<feature type="strand" evidence="9">
    <location>
        <begin position="436"/>
        <end position="440"/>
    </location>
</feature>
<feature type="strand" evidence="9">
    <location>
        <begin position="443"/>
        <end position="447"/>
    </location>
</feature>
<feature type="helix" evidence="9">
    <location>
        <begin position="449"/>
        <end position="452"/>
    </location>
</feature>
<feature type="strand" evidence="9">
    <location>
        <begin position="453"/>
        <end position="455"/>
    </location>
</feature>
<feature type="helix" evidence="9">
    <location>
        <begin position="459"/>
        <end position="461"/>
    </location>
</feature>
<feature type="strand" evidence="9">
    <location>
        <begin position="464"/>
        <end position="470"/>
    </location>
</feature>
<feature type="strand" evidence="9">
    <location>
        <begin position="479"/>
        <end position="483"/>
    </location>
</feature>
<feature type="helix" evidence="9">
    <location>
        <begin position="485"/>
        <end position="488"/>
    </location>
</feature>
<feature type="strand" evidence="9">
    <location>
        <begin position="491"/>
        <end position="496"/>
    </location>
</feature>
<feature type="turn" evidence="9">
    <location>
        <begin position="497"/>
        <end position="500"/>
    </location>
</feature>
<feature type="strand" evidence="9">
    <location>
        <begin position="501"/>
        <end position="507"/>
    </location>
</feature>
<dbReference type="EC" id="3.4.23.40"/>
<dbReference type="EMBL" id="X56136">
    <property type="protein sequence ID" value="CAA39602.1"/>
    <property type="molecule type" value="mRNA"/>
</dbReference>
<dbReference type="PIR" id="S19697">
    <property type="entry name" value="S19697"/>
</dbReference>
<dbReference type="PDB" id="1QDM">
    <property type="method" value="X-ray"/>
    <property type="resolution" value="2.30 A"/>
    <property type="chains" value="A/B/C=31-508"/>
</dbReference>
<dbReference type="PDBsum" id="1QDM"/>
<dbReference type="SMR" id="P42210"/>
<dbReference type="MEROPS" id="A01.020"/>
<dbReference type="KEGG" id="ag:CAA39602"/>
<dbReference type="OMA" id="KGEYMIS"/>
<dbReference type="EvolutionaryTrace" id="P42210"/>
<dbReference type="ExpressionAtlas" id="P42210">
    <property type="expression patterns" value="baseline and differential"/>
</dbReference>
<dbReference type="GO" id="GO:0005773">
    <property type="term" value="C:vacuole"/>
    <property type="evidence" value="ECO:0007669"/>
    <property type="project" value="UniProtKB-SubCell"/>
</dbReference>
<dbReference type="GO" id="GO:0004190">
    <property type="term" value="F:aspartic-type endopeptidase activity"/>
    <property type="evidence" value="ECO:0007669"/>
    <property type="project" value="UniProtKB-KW"/>
</dbReference>
<dbReference type="GO" id="GO:0006629">
    <property type="term" value="P:lipid metabolic process"/>
    <property type="evidence" value="ECO:0007669"/>
    <property type="project" value="InterPro"/>
</dbReference>
<dbReference type="GO" id="GO:0006508">
    <property type="term" value="P:proteolysis"/>
    <property type="evidence" value="ECO:0007669"/>
    <property type="project" value="UniProtKB-KW"/>
</dbReference>
<dbReference type="CDD" id="cd06098">
    <property type="entry name" value="phytepsin"/>
    <property type="match status" value="1"/>
</dbReference>
<dbReference type="FunFam" id="1.10.225.10:FF:000001">
    <property type="entry name" value="Aspartic proteinase A1"/>
    <property type="match status" value="1"/>
</dbReference>
<dbReference type="FunFam" id="2.40.70.10:FF:000009">
    <property type="entry name" value="Aspartic proteinase A1"/>
    <property type="match status" value="1"/>
</dbReference>
<dbReference type="FunFam" id="2.40.70.10:FF:000002">
    <property type="entry name" value="Vacuolar aspartic proteinase"/>
    <property type="match status" value="1"/>
</dbReference>
<dbReference type="Gene3D" id="2.40.70.10">
    <property type="entry name" value="Acid Proteases"/>
    <property type="match status" value="2"/>
</dbReference>
<dbReference type="Gene3D" id="1.10.225.10">
    <property type="entry name" value="Saposin-like"/>
    <property type="match status" value="1"/>
</dbReference>
<dbReference type="InterPro" id="IPR001461">
    <property type="entry name" value="Aspartic_peptidase_A1"/>
</dbReference>
<dbReference type="InterPro" id="IPR001969">
    <property type="entry name" value="Aspartic_peptidase_AS"/>
</dbReference>
<dbReference type="InterPro" id="IPR033121">
    <property type="entry name" value="PEPTIDASE_A1"/>
</dbReference>
<dbReference type="InterPro" id="IPR021109">
    <property type="entry name" value="Peptidase_aspartic_dom_sf"/>
</dbReference>
<dbReference type="InterPro" id="IPR033869">
    <property type="entry name" value="Phytepsin"/>
</dbReference>
<dbReference type="InterPro" id="IPR007856">
    <property type="entry name" value="SapB_1"/>
</dbReference>
<dbReference type="InterPro" id="IPR008138">
    <property type="entry name" value="SapB_2"/>
</dbReference>
<dbReference type="InterPro" id="IPR011001">
    <property type="entry name" value="Saposin-like"/>
</dbReference>
<dbReference type="InterPro" id="IPR008139">
    <property type="entry name" value="SaposinB_dom"/>
</dbReference>
<dbReference type="PANTHER" id="PTHR47966:SF76">
    <property type="entry name" value="ASPARTIC PROTEINASE A1"/>
    <property type="match status" value="1"/>
</dbReference>
<dbReference type="PANTHER" id="PTHR47966">
    <property type="entry name" value="BETA-SITE APP-CLEAVING ENZYME, ISOFORM A-RELATED"/>
    <property type="match status" value="1"/>
</dbReference>
<dbReference type="Pfam" id="PF00026">
    <property type="entry name" value="Asp"/>
    <property type="match status" value="1"/>
</dbReference>
<dbReference type="Pfam" id="PF05184">
    <property type="entry name" value="SapB_1"/>
    <property type="match status" value="1"/>
</dbReference>
<dbReference type="Pfam" id="PF03489">
    <property type="entry name" value="SapB_2"/>
    <property type="match status" value="1"/>
</dbReference>
<dbReference type="PRINTS" id="PR00792">
    <property type="entry name" value="PEPSIN"/>
</dbReference>
<dbReference type="SMART" id="SM00741">
    <property type="entry name" value="SapB"/>
    <property type="match status" value="1"/>
</dbReference>
<dbReference type="SUPFAM" id="SSF50630">
    <property type="entry name" value="Acid proteases"/>
    <property type="match status" value="1"/>
</dbReference>
<dbReference type="SUPFAM" id="SSF47862">
    <property type="entry name" value="Saposin"/>
    <property type="match status" value="1"/>
</dbReference>
<dbReference type="PROSITE" id="PS00141">
    <property type="entry name" value="ASP_PROTEASE"/>
    <property type="match status" value="2"/>
</dbReference>
<dbReference type="PROSITE" id="PS51767">
    <property type="entry name" value="PEPTIDASE_A1"/>
    <property type="match status" value="1"/>
</dbReference>
<dbReference type="PROSITE" id="PS50015">
    <property type="entry name" value="SAP_B"/>
    <property type="match status" value="2"/>
</dbReference>
<accession>P42210</accession>
<keyword id="KW-0002">3D-structure</keyword>
<keyword id="KW-0064">Aspartyl protease</keyword>
<keyword id="KW-0903">Direct protein sequencing</keyword>
<keyword id="KW-1015">Disulfide bond</keyword>
<keyword id="KW-0325">Glycoprotein</keyword>
<keyword id="KW-0378">Hydrolase</keyword>
<keyword id="KW-0645">Protease</keyword>
<keyword id="KW-0732">Signal</keyword>
<keyword id="KW-0926">Vacuole</keyword>
<keyword id="KW-0865">Zymogen</keyword>